<protein>
    <recommendedName>
        <fullName evidence="1">Cell division protein ZapA</fullName>
    </recommendedName>
    <alternativeName>
        <fullName evidence="1">Z ring-associated protein ZapA</fullName>
    </alternativeName>
</protein>
<sequence>MSDGKKTKTTVNIYGQHFTIIGEESKAHMRHVAGVVDDKMREINEKNPYLDINKLAVLTAVNVVHDYMKLQEKYEILERQLKEKE</sequence>
<evidence type="ECO:0000255" key="1">
    <source>
        <dbReference type="HAMAP-Rule" id="MF_02013"/>
    </source>
</evidence>
<dbReference type="EMBL" id="CP000560">
    <property type="protein sequence ID" value="ABS74926.1"/>
    <property type="molecule type" value="Genomic_DNA"/>
</dbReference>
<dbReference type="RefSeq" id="WP_007408114.1">
    <property type="nucleotide sequence ID" value="NC_009725.2"/>
</dbReference>
<dbReference type="SMR" id="A7Z7F0"/>
<dbReference type="GeneID" id="93081710"/>
<dbReference type="KEGG" id="bay:RBAM_025680"/>
<dbReference type="HOGENOM" id="CLU_116623_4_0_9"/>
<dbReference type="Proteomes" id="UP000001120">
    <property type="component" value="Chromosome"/>
</dbReference>
<dbReference type="GO" id="GO:0032153">
    <property type="term" value="C:cell division site"/>
    <property type="evidence" value="ECO:0007669"/>
    <property type="project" value="TreeGrafter"/>
</dbReference>
<dbReference type="GO" id="GO:0030428">
    <property type="term" value="C:cell septum"/>
    <property type="evidence" value="ECO:0007669"/>
    <property type="project" value="TreeGrafter"/>
</dbReference>
<dbReference type="GO" id="GO:0005829">
    <property type="term" value="C:cytosol"/>
    <property type="evidence" value="ECO:0007669"/>
    <property type="project" value="TreeGrafter"/>
</dbReference>
<dbReference type="GO" id="GO:0005886">
    <property type="term" value="C:plasma membrane"/>
    <property type="evidence" value="ECO:0007669"/>
    <property type="project" value="UniProtKB-UniRule"/>
</dbReference>
<dbReference type="GO" id="GO:0000917">
    <property type="term" value="P:division septum assembly"/>
    <property type="evidence" value="ECO:0007669"/>
    <property type="project" value="UniProtKB-KW"/>
</dbReference>
<dbReference type="GO" id="GO:0043093">
    <property type="term" value="P:FtsZ-dependent cytokinesis"/>
    <property type="evidence" value="ECO:0007669"/>
    <property type="project" value="TreeGrafter"/>
</dbReference>
<dbReference type="GO" id="GO:0000921">
    <property type="term" value="P:septin ring assembly"/>
    <property type="evidence" value="ECO:0007669"/>
    <property type="project" value="TreeGrafter"/>
</dbReference>
<dbReference type="Gene3D" id="6.10.250.790">
    <property type="match status" value="1"/>
</dbReference>
<dbReference type="HAMAP" id="MF_02013">
    <property type="entry name" value="ZapA_type2"/>
    <property type="match status" value="1"/>
</dbReference>
<dbReference type="InterPro" id="IPR053712">
    <property type="entry name" value="Bac_CellDiv_Activator"/>
</dbReference>
<dbReference type="InterPro" id="IPR007838">
    <property type="entry name" value="Cell_div_ZapA-like"/>
</dbReference>
<dbReference type="InterPro" id="IPR036192">
    <property type="entry name" value="Cell_div_ZapA-like_sf"/>
</dbReference>
<dbReference type="InterPro" id="IPR023688">
    <property type="entry name" value="Cell_div_ZapA_firmicutes"/>
</dbReference>
<dbReference type="NCBIfam" id="NF010724">
    <property type="entry name" value="PRK14126.1"/>
    <property type="match status" value="1"/>
</dbReference>
<dbReference type="PANTHER" id="PTHR34981">
    <property type="entry name" value="CELL DIVISION PROTEIN ZAPA"/>
    <property type="match status" value="1"/>
</dbReference>
<dbReference type="PANTHER" id="PTHR34981:SF1">
    <property type="entry name" value="CELL DIVISION PROTEIN ZAPA"/>
    <property type="match status" value="1"/>
</dbReference>
<dbReference type="Pfam" id="PF05164">
    <property type="entry name" value="ZapA"/>
    <property type="match status" value="1"/>
</dbReference>
<dbReference type="SUPFAM" id="SSF102829">
    <property type="entry name" value="Cell division protein ZapA-like"/>
    <property type="match status" value="1"/>
</dbReference>
<organism>
    <name type="scientific">Bacillus velezensis (strain DSM 23117 / BGSC 10A6 / LMG 26770 / FZB42)</name>
    <name type="common">Bacillus amyloliquefaciens subsp. plantarum</name>
    <dbReference type="NCBI Taxonomy" id="326423"/>
    <lineage>
        <taxon>Bacteria</taxon>
        <taxon>Bacillati</taxon>
        <taxon>Bacillota</taxon>
        <taxon>Bacilli</taxon>
        <taxon>Bacillales</taxon>
        <taxon>Bacillaceae</taxon>
        <taxon>Bacillus</taxon>
        <taxon>Bacillus amyloliquefaciens group</taxon>
    </lineage>
</organism>
<keyword id="KW-0131">Cell cycle</keyword>
<keyword id="KW-0132">Cell division</keyword>
<keyword id="KW-0175">Coiled coil</keyword>
<keyword id="KW-0963">Cytoplasm</keyword>
<keyword id="KW-0717">Septation</keyword>
<name>ZAPA_BACVZ</name>
<comment type="function">
    <text evidence="1">Activator of cell division through the inhibition of FtsZ GTPase activity, therefore promoting FtsZ assembly into bundles of protofilaments necessary for the formation of the division Z ring. It is recruited early at mid-cell but it is not essential for cell division.</text>
</comment>
<comment type="subunit">
    <text evidence="1">Homodimer. Interacts with FtsZ.</text>
</comment>
<comment type="subcellular location">
    <subcellularLocation>
        <location evidence="1">Cytoplasm</location>
    </subcellularLocation>
    <text evidence="1">Localizes at mid-cell. In sporulating cells, localizes near the cell poles.</text>
</comment>
<comment type="similarity">
    <text evidence="1">Belongs to the ZapA family. Type 2 subfamily.</text>
</comment>
<proteinExistence type="inferred from homology"/>
<gene>
    <name evidence="1" type="primary">zapA</name>
    <name type="ordered locus">RBAM_025680</name>
</gene>
<reference key="1">
    <citation type="journal article" date="2007" name="Nat. Biotechnol.">
        <title>Comparative analysis of the complete genome sequence of the plant growth-promoting bacterium Bacillus amyloliquefaciens FZB42.</title>
        <authorList>
            <person name="Chen X.H."/>
            <person name="Koumoutsi A."/>
            <person name="Scholz R."/>
            <person name="Eisenreich A."/>
            <person name="Schneider K."/>
            <person name="Heinemeyer I."/>
            <person name="Morgenstern B."/>
            <person name="Voss B."/>
            <person name="Hess W.R."/>
            <person name="Reva O."/>
            <person name="Junge H."/>
            <person name="Voigt B."/>
            <person name="Jungblut P.R."/>
            <person name="Vater J."/>
            <person name="Suessmuth R."/>
            <person name="Liesegang H."/>
            <person name="Strittmatter A."/>
            <person name="Gottschalk G."/>
            <person name="Borriss R."/>
        </authorList>
    </citation>
    <scope>NUCLEOTIDE SEQUENCE [LARGE SCALE GENOMIC DNA]</scope>
    <source>
        <strain>DSM 23117 / BGSC 10A6 / LMG 26770 / FZB42</strain>
    </source>
</reference>
<feature type="chain" id="PRO_0000345675" description="Cell division protein ZapA">
    <location>
        <begin position="1"/>
        <end position="85"/>
    </location>
</feature>
<feature type="coiled-coil region" evidence="1">
    <location>
        <begin position="59"/>
        <end position="85"/>
    </location>
</feature>
<accession>A7Z7F0</accession>